<sequence>MPASPLVWINGLHMTEQRPIAVLGGGSFGTAVANLLAENGHQVRQWMRDPEQAEAIRVNRENPRYLKGIKILPGVTAVTDLQETLDACELCFVALPSSALRTVLAAHAERLSGKMLVSLTKGIEAQTFKLMSQILEEIAPQARIGVLSGPNLAREIAEHALTATVVASEDEELCKAVQAALHGRTFRVYASADRFGVELGGALKNVYAIIAGMAVALEMGENTKSMLITRALAEMTRFAVNQGANPMTFLGLAGVGDLIVTCSSPKSRNYQVGFALGQGLSLDEAVSRLGEVAEGVNTLKVLKAKAQEVGVYMPLVAGLHAILFEGRTLEQVIGLLMRAEPKTDVDFISTSGFN</sequence>
<proteinExistence type="inferred from homology"/>
<keyword id="KW-0963">Cytoplasm</keyword>
<keyword id="KW-0444">Lipid biosynthesis</keyword>
<keyword id="KW-0443">Lipid metabolism</keyword>
<keyword id="KW-0520">NAD</keyword>
<keyword id="KW-0521">NADP</keyword>
<keyword id="KW-0547">Nucleotide-binding</keyword>
<keyword id="KW-0560">Oxidoreductase</keyword>
<keyword id="KW-0594">Phospholipid biosynthesis</keyword>
<keyword id="KW-1208">Phospholipid metabolism</keyword>
<accession>Q3K8F9</accession>
<feature type="chain" id="PRO_0000255345" description="Glycerol-3-phosphate dehydrogenase [NAD(P)+]">
    <location>
        <begin position="1"/>
        <end position="354"/>
    </location>
</feature>
<feature type="active site" description="Proton acceptor" evidence="1">
    <location>
        <position position="204"/>
    </location>
</feature>
<feature type="binding site" evidence="1">
    <location>
        <position position="27"/>
    </location>
    <ligand>
        <name>NADPH</name>
        <dbReference type="ChEBI" id="CHEBI:57783"/>
    </ligand>
</feature>
<feature type="binding site" evidence="1">
    <location>
        <position position="28"/>
    </location>
    <ligand>
        <name>NADPH</name>
        <dbReference type="ChEBI" id="CHEBI:57783"/>
    </ligand>
</feature>
<feature type="binding site" evidence="1">
    <location>
        <position position="48"/>
    </location>
    <ligand>
        <name>NADPH</name>
        <dbReference type="ChEBI" id="CHEBI:57783"/>
    </ligand>
</feature>
<feature type="binding site" evidence="1">
    <location>
        <position position="121"/>
    </location>
    <ligand>
        <name>NADPH</name>
        <dbReference type="ChEBI" id="CHEBI:57783"/>
    </ligand>
</feature>
<feature type="binding site" evidence="1">
    <location>
        <position position="121"/>
    </location>
    <ligand>
        <name>sn-glycerol 3-phosphate</name>
        <dbReference type="ChEBI" id="CHEBI:57597"/>
    </ligand>
</feature>
<feature type="binding site" evidence="1">
    <location>
        <position position="149"/>
    </location>
    <ligand>
        <name>sn-glycerol 3-phosphate</name>
        <dbReference type="ChEBI" id="CHEBI:57597"/>
    </ligand>
</feature>
<feature type="binding site" evidence="1">
    <location>
        <position position="153"/>
    </location>
    <ligand>
        <name>NADPH</name>
        <dbReference type="ChEBI" id="CHEBI:57783"/>
    </ligand>
</feature>
<feature type="binding site" evidence="1">
    <location>
        <position position="204"/>
    </location>
    <ligand>
        <name>sn-glycerol 3-phosphate</name>
        <dbReference type="ChEBI" id="CHEBI:57597"/>
    </ligand>
</feature>
<feature type="binding site" evidence="1">
    <location>
        <position position="257"/>
    </location>
    <ligand>
        <name>sn-glycerol 3-phosphate</name>
        <dbReference type="ChEBI" id="CHEBI:57597"/>
    </ligand>
</feature>
<feature type="binding site" evidence="1">
    <location>
        <position position="267"/>
    </location>
    <ligand>
        <name>sn-glycerol 3-phosphate</name>
        <dbReference type="ChEBI" id="CHEBI:57597"/>
    </ligand>
</feature>
<feature type="binding site" evidence="1">
    <location>
        <position position="268"/>
    </location>
    <ligand>
        <name>NADPH</name>
        <dbReference type="ChEBI" id="CHEBI:57783"/>
    </ligand>
</feature>
<feature type="binding site" evidence="1">
    <location>
        <position position="268"/>
    </location>
    <ligand>
        <name>sn-glycerol 3-phosphate</name>
        <dbReference type="ChEBI" id="CHEBI:57597"/>
    </ligand>
</feature>
<feature type="binding site" evidence="1">
    <location>
        <position position="269"/>
    </location>
    <ligand>
        <name>sn-glycerol 3-phosphate</name>
        <dbReference type="ChEBI" id="CHEBI:57597"/>
    </ligand>
</feature>
<feature type="binding site" evidence="1">
    <location>
        <position position="292"/>
    </location>
    <ligand>
        <name>NADPH</name>
        <dbReference type="ChEBI" id="CHEBI:57783"/>
    </ligand>
</feature>
<feature type="binding site" evidence="1">
    <location>
        <position position="294"/>
    </location>
    <ligand>
        <name>NADPH</name>
        <dbReference type="ChEBI" id="CHEBI:57783"/>
    </ligand>
</feature>
<comment type="function">
    <text evidence="1">Catalyzes the reduction of the glycolytic intermediate dihydroxyacetone phosphate (DHAP) to sn-glycerol 3-phosphate (G3P), the key precursor for phospholipid synthesis.</text>
</comment>
<comment type="catalytic activity">
    <reaction evidence="1">
        <text>sn-glycerol 3-phosphate + NAD(+) = dihydroxyacetone phosphate + NADH + H(+)</text>
        <dbReference type="Rhea" id="RHEA:11092"/>
        <dbReference type="ChEBI" id="CHEBI:15378"/>
        <dbReference type="ChEBI" id="CHEBI:57540"/>
        <dbReference type="ChEBI" id="CHEBI:57597"/>
        <dbReference type="ChEBI" id="CHEBI:57642"/>
        <dbReference type="ChEBI" id="CHEBI:57945"/>
        <dbReference type="EC" id="1.1.1.94"/>
    </reaction>
    <physiologicalReaction direction="right-to-left" evidence="1">
        <dbReference type="Rhea" id="RHEA:11094"/>
    </physiologicalReaction>
</comment>
<comment type="catalytic activity">
    <reaction evidence="1">
        <text>sn-glycerol 3-phosphate + NADP(+) = dihydroxyacetone phosphate + NADPH + H(+)</text>
        <dbReference type="Rhea" id="RHEA:11096"/>
        <dbReference type="ChEBI" id="CHEBI:15378"/>
        <dbReference type="ChEBI" id="CHEBI:57597"/>
        <dbReference type="ChEBI" id="CHEBI:57642"/>
        <dbReference type="ChEBI" id="CHEBI:57783"/>
        <dbReference type="ChEBI" id="CHEBI:58349"/>
        <dbReference type="EC" id="1.1.1.94"/>
    </reaction>
    <physiologicalReaction direction="right-to-left" evidence="1">
        <dbReference type="Rhea" id="RHEA:11098"/>
    </physiologicalReaction>
</comment>
<comment type="pathway">
    <text evidence="1">Membrane lipid metabolism; glycerophospholipid metabolism.</text>
</comment>
<comment type="subcellular location">
    <subcellularLocation>
        <location evidence="1">Cytoplasm</location>
    </subcellularLocation>
</comment>
<comment type="similarity">
    <text evidence="1">Belongs to the NAD-dependent glycerol-3-phosphate dehydrogenase family.</text>
</comment>
<dbReference type="EC" id="1.1.1.94" evidence="1"/>
<dbReference type="EMBL" id="CP000094">
    <property type="protein sequence ID" value="ABA75945.1"/>
    <property type="molecule type" value="Genomic_DNA"/>
</dbReference>
<dbReference type="SMR" id="Q3K8F9"/>
<dbReference type="KEGG" id="pfo:Pfl01_4208"/>
<dbReference type="eggNOG" id="COG0240">
    <property type="taxonomic scope" value="Bacteria"/>
</dbReference>
<dbReference type="HOGENOM" id="CLU_033449_0_2_6"/>
<dbReference type="UniPathway" id="UPA00940"/>
<dbReference type="Proteomes" id="UP000002704">
    <property type="component" value="Chromosome"/>
</dbReference>
<dbReference type="GO" id="GO:0005829">
    <property type="term" value="C:cytosol"/>
    <property type="evidence" value="ECO:0007669"/>
    <property type="project" value="TreeGrafter"/>
</dbReference>
<dbReference type="GO" id="GO:0047952">
    <property type="term" value="F:glycerol-3-phosphate dehydrogenase [NAD(P)+] activity"/>
    <property type="evidence" value="ECO:0007669"/>
    <property type="project" value="UniProtKB-UniRule"/>
</dbReference>
<dbReference type="GO" id="GO:0051287">
    <property type="term" value="F:NAD binding"/>
    <property type="evidence" value="ECO:0007669"/>
    <property type="project" value="InterPro"/>
</dbReference>
<dbReference type="GO" id="GO:0005975">
    <property type="term" value="P:carbohydrate metabolic process"/>
    <property type="evidence" value="ECO:0007669"/>
    <property type="project" value="InterPro"/>
</dbReference>
<dbReference type="GO" id="GO:0046167">
    <property type="term" value="P:glycerol-3-phosphate biosynthetic process"/>
    <property type="evidence" value="ECO:0007669"/>
    <property type="project" value="UniProtKB-UniRule"/>
</dbReference>
<dbReference type="GO" id="GO:0046168">
    <property type="term" value="P:glycerol-3-phosphate catabolic process"/>
    <property type="evidence" value="ECO:0007669"/>
    <property type="project" value="InterPro"/>
</dbReference>
<dbReference type="GO" id="GO:0046474">
    <property type="term" value="P:glycerophospholipid biosynthetic process"/>
    <property type="evidence" value="ECO:0007669"/>
    <property type="project" value="TreeGrafter"/>
</dbReference>
<dbReference type="FunFam" id="1.10.1040.10:FF:000001">
    <property type="entry name" value="Glycerol-3-phosphate dehydrogenase [NAD(P)+]"/>
    <property type="match status" value="1"/>
</dbReference>
<dbReference type="FunFam" id="3.40.50.720:FF:000019">
    <property type="entry name" value="Glycerol-3-phosphate dehydrogenase [NAD(P)+]"/>
    <property type="match status" value="1"/>
</dbReference>
<dbReference type="Gene3D" id="1.10.1040.10">
    <property type="entry name" value="N-(1-d-carboxylethyl)-l-norvaline Dehydrogenase, domain 2"/>
    <property type="match status" value="1"/>
</dbReference>
<dbReference type="Gene3D" id="3.40.50.720">
    <property type="entry name" value="NAD(P)-binding Rossmann-like Domain"/>
    <property type="match status" value="1"/>
</dbReference>
<dbReference type="HAMAP" id="MF_00394">
    <property type="entry name" value="NAD_Glyc3P_dehydrog"/>
    <property type="match status" value="1"/>
</dbReference>
<dbReference type="InterPro" id="IPR008927">
    <property type="entry name" value="6-PGluconate_DH-like_C_sf"/>
</dbReference>
<dbReference type="InterPro" id="IPR013328">
    <property type="entry name" value="6PGD_dom2"/>
</dbReference>
<dbReference type="InterPro" id="IPR006168">
    <property type="entry name" value="G3P_DH_NAD-dep"/>
</dbReference>
<dbReference type="InterPro" id="IPR006109">
    <property type="entry name" value="G3P_DH_NAD-dep_C"/>
</dbReference>
<dbReference type="InterPro" id="IPR011128">
    <property type="entry name" value="G3P_DH_NAD-dep_N"/>
</dbReference>
<dbReference type="InterPro" id="IPR036291">
    <property type="entry name" value="NAD(P)-bd_dom_sf"/>
</dbReference>
<dbReference type="NCBIfam" id="NF000940">
    <property type="entry name" value="PRK00094.1-2"/>
    <property type="match status" value="1"/>
</dbReference>
<dbReference type="NCBIfam" id="NF000942">
    <property type="entry name" value="PRK00094.1-4"/>
    <property type="match status" value="1"/>
</dbReference>
<dbReference type="NCBIfam" id="NF000946">
    <property type="entry name" value="PRK00094.2-4"/>
    <property type="match status" value="1"/>
</dbReference>
<dbReference type="PANTHER" id="PTHR11728">
    <property type="entry name" value="GLYCEROL-3-PHOSPHATE DEHYDROGENASE"/>
    <property type="match status" value="1"/>
</dbReference>
<dbReference type="PANTHER" id="PTHR11728:SF1">
    <property type="entry name" value="GLYCEROL-3-PHOSPHATE DEHYDROGENASE [NAD(+)] 2, CHLOROPLASTIC"/>
    <property type="match status" value="1"/>
</dbReference>
<dbReference type="Pfam" id="PF07479">
    <property type="entry name" value="NAD_Gly3P_dh_C"/>
    <property type="match status" value="1"/>
</dbReference>
<dbReference type="Pfam" id="PF01210">
    <property type="entry name" value="NAD_Gly3P_dh_N"/>
    <property type="match status" value="1"/>
</dbReference>
<dbReference type="PIRSF" id="PIRSF000114">
    <property type="entry name" value="Glycerol-3-P_dh"/>
    <property type="match status" value="1"/>
</dbReference>
<dbReference type="PRINTS" id="PR00077">
    <property type="entry name" value="GPDHDRGNASE"/>
</dbReference>
<dbReference type="SUPFAM" id="SSF48179">
    <property type="entry name" value="6-phosphogluconate dehydrogenase C-terminal domain-like"/>
    <property type="match status" value="1"/>
</dbReference>
<dbReference type="SUPFAM" id="SSF51735">
    <property type="entry name" value="NAD(P)-binding Rossmann-fold domains"/>
    <property type="match status" value="1"/>
</dbReference>
<dbReference type="PROSITE" id="PS00957">
    <property type="entry name" value="NAD_G3PDH"/>
    <property type="match status" value="1"/>
</dbReference>
<gene>
    <name evidence="1" type="primary">gpsA</name>
    <name type="ordered locus">Pfl01_4208</name>
</gene>
<evidence type="ECO:0000255" key="1">
    <source>
        <dbReference type="HAMAP-Rule" id="MF_00394"/>
    </source>
</evidence>
<protein>
    <recommendedName>
        <fullName evidence="1">Glycerol-3-phosphate dehydrogenase [NAD(P)+]</fullName>
        <ecNumber evidence="1">1.1.1.94</ecNumber>
    </recommendedName>
    <alternativeName>
        <fullName evidence="1">NAD(P)(+)-dependent glycerol-3-phosphate dehydrogenase</fullName>
    </alternativeName>
    <alternativeName>
        <fullName evidence="1">NAD(P)H-dependent dihydroxyacetone-phosphate reductase</fullName>
    </alternativeName>
</protein>
<organism>
    <name type="scientific">Pseudomonas fluorescens (strain Pf0-1)</name>
    <dbReference type="NCBI Taxonomy" id="205922"/>
    <lineage>
        <taxon>Bacteria</taxon>
        <taxon>Pseudomonadati</taxon>
        <taxon>Pseudomonadota</taxon>
        <taxon>Gammaproteobacteria</taxon>
        <taxon>Pseudomonadales</taxon>
        <taxon>Pseudomonadaceae</taxon>
        <taxon>Pseudomonas</taxon>
    </lineage>
</organism>
<reference key="1">
    <citation type="journal article" date="2009" name="Genome Biol.">
        <title>Genomic and genetic analyses of diversity and plant interactions of Pseudomonas fluorescens.</title>
        <authorList>
            <person name="Silby M.W."/>
            <person name="Cerdeno-Tarraga A.M."/>
            <person name="Vernikos G.S."/>
            <person name="Giddens S.R."/>
            <person name="Jackson R.W."/>
            <person name="Preston G.M."/>
            <person name="Zhang X.-X."/>
            <person name="Moon C.D."/>
            <person name="Gehrig S.M."/>
            <person name="Godfrey S.A.C."/>
            <person name="Knight C.G."/>
            <person name="Malone J.G."/>
            <person name="Robinson Z."/>
            <person name="Spiers A.J."/>
            <person name="Harris S."/>
            <person name="Challis G.L."/>
            <person name="Yaxley A.M."/>
            <person name="Harris D."/>
            <person name="Seeger K."/>
            <person name="Murphy L."/>
            <person name="Rutter S."/>
            <person name="Squares R."/>
            <person name="Quail M.A."/>
            <person name="Saunders E."/>
            <person name="Mavromatis K."/>
            <person name="Brettin T.S."/>
            <person name="Bentley S.D."/>
            <person name="Hothersall J."/>
            <person name="Stephens E."/>
            <person name="Thomas C.M."/>
            <person name="Parkhill J."/>
            <person name="Levy S.B."/>
            <person name="Rainey P.B."/>
            <person name="Thomson N.R."/>
        </authorList>
    </citation>
    <scope>NUCLEOTIDE SEQUENCE [LARGE SCALE GENOMIC DNA]</scope>
    <source>
        <strain>Pf0-1</strain>
    </source>
</reference>
<name>GPDA_PSEPF</name>